<dbReference type="EMBL" id="AF145375">
    <property type="protein sequence ID" value="AAD39814.1"/>
    <property type="molecule type" value="mRNA"/>
</dbReference>
<dbReference type="EMBL" id="BX284606">
    <property type="protein sequence ID" value="CAB01866.1"/>
    <property type="molecule type" value="Genomic_DNA"/>
</dbReference>
<dbReference type="PIR" id="T19940">
    <property type="entry name" value="T19940"/>
</dbReference>
<dbReference type="RefSeq" id="NP_510428.1">
    <property type="nucleotide sequence ID" value="NM_078027.7"/>
</dbReference>
<dbReference type="SMR" id="G5EEM6"/>
<dbReference type="FunCoup" id="G5EEM6">
    <property type="interactions" value="2472"/>
</dbReference>
<dbReference type="IntAct" id="G5EEM6">
    <property type="interactions" value="2"/>
</dbReference>
<dbReference type="STRING" id="6239.C44H4.5.1"/>
<dbReference type="PaxDb" id="6239-C44H4.5"/>
<dbReference type="PeptideAtlas" id="G5EEM6"/>
<dbReference type="EnsemblMetazoa" id="C44H4.5.1">
    <property type="protein sequence ID" value="C44H4.5.1"/>
    <property type="gene ID" value="WBGene00006524"/>
</dbReference>
<dbReference type="GeneID" id="181556"/>
<dbReference type="KEGG" id="cel:CELE_C44H4.5"/>
<dbReference type="AGR" id="WB:WBGene00006524"/>
<dbReference type="CTD" id="181556"/>
<dbReference type="WormBase" id="C44H4.5">
    <property type="protein sequence ID" value="CE08726"/>
    <property type="gene ID" value="WBGene00006524"/>
    <property type="gene designation" value="tap-1"/>
</dbReference>
<dbReference type="eggNOG" id="KOG0698">
    <property type="taxonomic scope" value="Eukaryota"/>
</dbReference>
<dbReference type="HOGENOM" id="CLU_767943_0_0_1"/>
<dbReference type="InParanoid" id="G5EEM6"/>
<dbReference type="OMA" id="NHREEMT"/>
<dbReference type="OrthoDB" id="10049211at2759"/>
<dbReference type="PhylomeDB" id="G5EEM6"/>
<dbReference type="Reactome" id="R-CEL-1169408">
    <property type="pathway name" value="ISG15 antiviral mechanism"/>
</dbReference>
<dbReference type="SignaLink" id="G5EEM6"/>
<dbReference type="PRO" id="PR:G5EEM6"/>
<dbReference type="Proteomes" id="UP000001940">
    <property type="component" value="Chromosome X"/>
</dbReference>
<dbReference type="Bgee" id="WBGene00006524">
    <property type="expression patterns" value="Expressed in pharyngeal muscle cell (C elegans) and 3 other cell types or tissues"/>
</dbReference>
<dbReference type="GO" id="GO:0051019">
    <property type="term" value="F:mitogen-activated protein kinase binding"/>
    <property type="evidence" value="ECO:0000318"/>
    <property type="project" value="GO_Central"/>
</dbReference>
<dbReference type="GO" id="GO:0031435">
    <property type="term" value="F:mitogen-activated protein kinase kinase kinase binding"/>
    <property type="evidence" value="ECO:0000353"/>
    <property type="project" value="WormBase"/>
</dbReference>
<dbReference type="GO" id="GO:0030295">
    <property type="term" value="F:protein kinase activator activity"/>
    <property type="evidence" value="ECO:0000314"/>
    <property type="project" value="WormBase"/>
</dbReference>
<dbReference type="GO" id="GO:0004722">
    <property type="term" value="F:protein serine/threonine phosphatase activity"/>
    <property type="evidence" value="ECO:0000318"/>
    <property type="project" value="GO_Central"/>
</dbReference>
<dbReference type="GO" id="GO:0001714">
    <property type="term" value="P:endodermal cell fate specification"/>
    <property type="evidence" value="ECO:0000316"/>
    <property type="project" value="WormBase"/>
</dbReference>
<dbReference type="GO" id="GO:0045814">
    <property type="term" value="P:negative regulation of gene expression, epigenetic"/>
    <property type="evidence" value="ECO:0000318"/>
    <property type="project" value="GO_Central"/>
</dbReference>
<dbReference type="GO" id="GO:0046580">
    <property type="term" value="P:negative regulation of Ras protein signal transduction"/>
    <property type="evidence" value="ECO:0000315"/>
    <property type="project" value="WormBase"/>
</dbReference>
<dbReference type="GO" id="GO:1902531">
    <property type="term" value="P:regulation of intracellular signal transduction"/>
    <property type="evidence" value="ECO:0000318"/>
    <property type="project" value="GO_Central"/>
</dbReference>
<dbReference type="CDD" id="cd00143">
    <property type="entry name" value="PP2Cc"/>
    <property type="match status" value="1"/>
</dbReference>
<dbReference type="Gene3D" id="3.60.40.10">
    <property type="entry name" value="PPM-type phosphatase domain"/>
    <property type="match status" value="1"/>
</dbReference>
<dbReference type="InterPro" id="IPR015655">
    <property type="entry name" value="PP2C"/>
</dbReference>
<dbReference type="InterPro" id="IPR036457">
    <property type="entry name" value="PPM-type-like_dom_sf"/>
</dbReference>
<dbReference type="InterPro" id="IPR001932">
    <property type="entry name" value="PPM-type_phosphatase-like_dom"/>
</dbReference>
<dbReference type="PANTHER" id="PTHR47992">
    <property type="entry name" value="PROTEIN PHOSPHATASE"/>
    <property type="match status" value="1"/>
</dbReference>
<dbReference type="Pfam" id="PF00481">
    <property type="entry name" value="PP2C"/>
    <property type="match status" value="1"/>
</dbReference>
<dbReference type="SMART" id="SM00332">
    <property type="entry name" value="PP2Cc"/>
    <property type="match status" value="1"/>
</dbReference>
<dbReference type="SUPFAM" id="SSF81606">
    <property type="entry name" value="PP2C-like"/>
    <property type="match status" value="1"/>
</dbReference>
<dbReference type="PROSITE" id="PS51746">
    <property type="entry name" value="PPM_2"/>
    <property type="match status" value="1"/>
</dbReference>
<reference evidence="7" key="1">
    <citation type="journal article" date="1999" name="Nature">
        <title>MAP kinase and Wnt pathways converge to downregulate an HMG-domain repressor in Caenorhabditis elegans.</title>
        <authorList>
            <person name="Meneghini M.D."/>
            <person name="Ishitani T."/>
            <person name="Carter J.C."/>
            <person name="Hisamoto N."/>
            <person name="Ninomiya-Tsuji J."/>
            <person name="Thorpe C.J."/>
            <person name="Hamill D.R."/>
            <person name="Matsumoto K."/>
            <person name="Bowerman B."/>
        </authorList>
    </citation>
    <scope>NUCLEOTIDE SEQUENCE [MRNA]</scope>
    <scope>FUNCTION</scope>
    <scope>INTERACTION WITH MOM-4</scope>
    <scope>DISRUPTION PHENOTYPE</scope>
</reference>
<reference evidence="8" key="2">
    <citation type="journal article" date="1998" name="Science">
        <title>Genome sequence of the nematode C. elegans: a platform for investigating biology.</title>
        <authorList>
            <consortium name="The C. elegans sequencing consortium"/>
        </authorList>
    </citation>
    <scope>NUCLEOTIDE SEQUENCE [LARGE SCALE GENOMIC DNA]</scope>
    <source>
        <strain evidence="8">Bristol N2</strain>
    </source>
</reference>
<reference evidence="6" key="3">
    <citation type="journal article" date="2001" name="J. Biol. Chem.">
        <title>An evolutionarily conserved motif in the TAB1 C-terminal region is necessary for interaction with and activation of TAK1 MAPKKK.</title>
        <authorList>
            <person name="Ono K."/>
            <person name="Ohtomo T."/>
            <person name="Sato S."/>
            <person name="Sugamata Y."/>
            <person name="Suzuki M."/>
            <person name="Hisamoto N."/>
            <person name="Ninomiya-Tsuji J."/>
            <person name="Tsuchiya M."/>
            <person name="Matsumoto K."/>
        </authorList>
    </citation>
    <scope>FUNCTION</scope>
    <scope>INTERACTION WITH MOM-4</scope>
    <scope>MUTAGENESIS OF ALA-364</scope>
</reference>
<keyword id="KW-1185">Reference proteome</keyword>
<gene>
    <name evidence="9" type="primary">tap-1</name>
    <name evidence="9" type="ORF">C44H4.5</name>
</gene>
<feature type="chain" id="PRO_0000436906" description="TGF-beta-activated kinase 1 and MAP3K7-binding protein 1" evidence="6">
    <location>
        <begin position="1"/>
        <end position="386"/>
    </location>
</feature>
<feature type="domain" description="PPM-type phosphatase" evidence="2">
    <location>
        <begin position="22"/>
        <end position="327"/>
    </location>
</feature>
<feature type="site" description="Required for interaction with mom-4" evidence="4">
    <location>
        <position position="364"/>
    </location>
</feature>
<feature type="mutagenesis site" description="Abolishes interaction with mom-4." evidence="4">
    <original>A</original>
    <variation>P</variation>
    <location>
        <position position="364"/>
    </location>
</feature>
<proteinExistence type="evidence at protein level"/>
<evidence type="ECO:0000250" key="1">
    <source>
        <dbReference type="UniProtKB" id="Q15750"/>
    </source>
</evidence>
<evidence type="ECO:0000255" key="2">
    <source>
        <dbReference type="PROSITE-ProRule" id="PRU01082"/>
    </source>
</evidence>
<evidence type="ECO:0000269" key="3">
    <source>
    </source>
</evidence>
<evidence type="ECO:0000269" key="4">
    <source>
    </source>
</evidence>
<evidence type="ECO:0000303" key="5">
    <source>
    </source>
</evidence>
<evidence type="ECO:0000305" key="6"/>
<evidence type="ECO:0000312" key="7">
    <source>
        <dbReference type="EMBL" id="AAD39814.1"/>
    </source>
</evidence>
<evidence type="ECO:0000312" key="8">
    <source>
        <dbReference type="Proteomes" id="UP000001940"/>
    </source>
</evidence>
<evidence type="ECO:0000312" key="9">
    <source>
        <dbReference type="WormBase" id="C44H4.5"/>
    </source>
</evidence>
<organism evidence="8">
    <name type="scientific">Caenorhabditis elegans</name>
    <dbReference type="NCBI Taxonomy" id="6239"/>
    <lineage>
        <taxon>Eukaryota</taxon>
        <taxon>Metazoa</taxon>
        <taxon>Ecdysozoa</taxon>
        <taxon>Nematoda</taxon>
        <taxon>Chromadorea</taxon>
        <taxon>Rhabditida</taxon>
        <taxon>Rhabditina</taxon>
        <taxon>Rhabditomorpha</taxon>
        <taxon>Rhabditoidea</taxon>
        <taxon>Rhabditidae</taxon>
        <taxon>Peloderinae</taxon>
        <taxon>Caenorhabditis</taxon>
    </lineage>
</organism>
<name>TAB1_CAEEL</name>
<accession>G5EEM6</accession>
<comment type="function">
    <text evidence="3 4">Involved in the Wnt signaling pathway by regulating mom-4 kinase activity.</text>
</comment>
<comment type="subunit">
    <text evidence="3 4">Interacts with mom-4; the interaction enhances mom-4 kinase activity.</text>
</comment>
<comment type="disruption phenotype">
    <text evidence="3">RNAi-mediated knockdown causes no obvious phenotype. Results in a 3-fold increase in the number of animals lacking a gut in a mom-4 (or11) mutant background.</text>
</comment>
<comment type="caution">
    <text evidence="1">Lacks several key residues involved in metal-binding and catalytic activity, therefore has lost phosphatase activity.</text>
</comment>
<sequence length="386" mass="43469">MGDDGFLDQYPANTDAGIGTVHSCRYSKQKNPVQNNDFLSCSMCIHNGPIKLYGIFSGFNGGDSTAKFVMNRLVYEIFGENPITPTLLPYQVVEEFKRKFENVAERYLLMNTDDLNNRLLKLEEQSETGNNAVSEINQKIRQGTTAIVVMIINQDLYVLNCGNSLAIAMNSENVVQLNSNLHNNDNPLEIVRIKGLGINPETVLNPTRAIGDLQRTHLFEETEAFKNAKGPPVISTPDVQYTKIDPSWRHLVLISDGVVQNLKEVEVENIPTEVSVRLIEDHTVTSTAQALVDSFARKHRDAYTMSDDKNFCISNHREEMTVIYVKLEEDYQAALYEQFDSAISTMESTNATLYEPCSTPYVDATNFNSGKNYEKMKKLLLTRPSK</sequence>
<protein>
    <recommendedName>
        <fullName evidence="1">TGF-beta-activated kinase 1 and MAP3K7-binding protein 1</fullName>
    </recommendedName>
    <alternativeName>
        <fullName evidence="5">TAB1-like protein 1</fullName>
    </alternativeName>
    <alternativeName>
        <fullName evidence="9">TAK1 kinase/MOM-4 binding Protein</fullName>
    </alternativeName>
</protein>